<feature type="chain" id="PRO_0000181899" description="Ribosome maturation factor RimP">
    <location>
        <begin position="1"/>
        <end position="152"/>
    </location>
</feature>
<keyword id="KW-0963">Cytoplasm</keyword>
<keyword id="KW-1185">Reference proteome</keyword>
<keyword id="KW-0690">Ribosome biogenesis</keyword>
<name>RIMP_PHOLL</name>
<comment type="function">
    <text evidence="1">Required for maturation of 30S ribosomal subunits.</text>
</comment>
<comment type="subcellular location">
    <subcellularLocation>
        <location evidence="1">Cytoplasm</location>
    </subcellularLocation>
</comment>
<comment type="similarity">
    <text evidence="1">Belongs to the RimP family.</text>
</comment>
<protein>
    <recommendedName>
        <fullName evidence="1">Ribosome maturation factor RimP</fullName>
    </recommendedName>
</protein>
<accession>Q7MYY5</accession>
<organism>
    <name type="scientific">Photorhabdus laumondii subsp. laumondii (strain DSM 15139 / CIP 105565 / TT01)</name>
    <name type="common">Photorhabdus luminescens subsp. laumondii</name>
    <dbReference type="NCBI Taxonomy" id="243265"/>
    <lineage>
        <taxon>Bacteria</taxon>
        <taxon>Pseudomonadati</taxon>
        <taxon>Pseudomonadota</taxon>
        <taxon>Gammaproteobacteria</taxon>
        <taxon>Enterobacterales</taxon>
        <taxon>Morganellaceae</taxon>
        <taxon>Photorhabdus</taxon>
    </lineage>
</organism>
<proteinExistence type="inferred from homology"/>
<gene>
    <name evidence="1" type="primary">rimP</name>
    <name type="ordered locus">plu4531</name>
</gene>
<sequence>MGLSTLEQKLTAMISAPVEALGFELVGLEFIRARVSTLRIYIDSENGITVDDCADVSHQVSAVLDVEDPISVLYNLEISSPGLERPLFTTEHYQRFIGEEVSLVLRIAMQNRRKWLGIIKTVDGEMITVTVDGKDEVFALSNIQKANLVPHF</sequence>
<reference key="1">
    <citation type="journal article" date="2003" name="Nat. Biotechnol.">
        <title>The genome sequence of the entomopathogenic bacterium Photorhabdus luminescens.</title>
        <authorList>
            <person name="Duchaud E."/>
            <person name="Rusniok C."/>
            <person name="Frangeul L."/>
            <person name="Buchrieser C."/>
            <person name="Givaudan A."/>
            <person name="Taourit S."/>
            <person name="Bocs S."/>
            <person name="Boursaux-Eude C."/>
            <person name="Chandler M."/>
            <person name="Charles J.-F."/>
            <person name="Dassa E."/>
            <person name="Derose R."/>
            <person name="Derzelle S."/>
            <person name="Freyssinet G."/>
            <person name="Gaudriault S."/>
            <person name="Medigue C."/>
            <person name="Lanois A."/>
            <person name="Powell K."/>
            <person name="Siguier P."/>
            <person name="Vincent R."/>
            <person name="Wingate V."/>
            <person name="Zouine M."/>
            <person name="Glaser P."/>
            <person name="Boemare N."/>
            <person name="Danchin A."/>
            <person name="Kunst F."/>
        </authorList>
    </citation>
    <scope>NUCLEOTIDE SEQUENCE [LARGE SCALE GENOMIC DNA]</scope>
    <source>
        <strain>DSM 15139 / CIP 105565 / TT01</strain>
    </source>
</reference>
<evidence type="ECO:0000255" key="1">
    <source>
        <dbReference type="HAMAP-Rule" id="MF_01077"/>
    </source>
</evidence>
<dbReference type="EMBL" id="BX571874">
    <property type="protein sequence ID" value="CAE16903.1"/>
    <property type="molecule type" value="Genomic_DNA"/>
</dbReference>
<dbReference type="SMR" id="Q7MYY5"/>
<dbReference type="STRING" id="243265.plu4531"/>
<dbReference type="KEGG" id="plu:plu4531"/>
<dbReference type="eggNOG" id="COG0779">
    <property type="taxonomic scope" value="Bacteria"/>
</dbReference>
<dbReference type="HOGENOM" id="CLU_070525_1_1_6"/>
<dbReference type="Proteomes" id="UP000002514">
    <property type="component" value="Chromosome"/>
</dbReference>
<dbReference type="GO" id="GO:0005829">
    <property type="term" value="C:cytosol"/>
    <property type="evidence" value="ECO:0007669"/>
    <property type="project" value="TreeGrafter"/>
</dbReference>
<dbReference type="GO" id="GO:0000028">
    <property type="term" value="P:ribosomal small subunit assembly"/>
    <property type="evidence" value="ECO:0007669"/>
    <property type="project" value="TreeGrafter"/>
</dbReference>
<dbReference type="GO" id="GO:0006412">
    <property type="term" value="P:translation"/>
    <property type="evidence" value="ECO:0007669"/>
    <property type="project" value="TreeGrafter"/>
</dbReference>
<dbReference type="CDD" id="cd01734">
    <property type="entry name" value="YlxS_C"/>
    <property type="match status" value="1"/>
</dbReference>
<dbReference type="FunFam" id="2.30.30.180:FF:000001">
    <property type="entry name" value="Ribosome maturation factor RimP"/>
    <property type="match status" value="1"/>
</dbReference>
<dbReference type="FunFam" id="3.30.300.70:FF:000001">
    <property type="entry name" value="Ribosome maturation factor RimP"/>
    <property type="match status" value="1"/>
</dbReference>
<dbReference type="Gene3D" id="2.30.30.180">
    <property type="entry name" value="Ribosome maturation factor RimP, C-terminal domain"/>
    <property type="match status" value="1"/>
</dbReference>
<dbReference type="Gene3D" id="3.30.300.70">
    <property type="entry name" value="RimP-like superfamily, N-terminal"/>
    <property type="match status" value="1"/>
</dbReference>
<dbReference type="HAMAP" id="MF_01077">
    <property type="entry name" value="RimP"/>
    <property type="match status" value="1"/>
</dbReference>
<dbReference type="InterPro" id="IPR003728">
    <property type="entry name" value="Ribosome_maturation_RimP"/>
</dbReference>
<dbReference type="InterPro" id="IPR028998">
    <property type="entry name" value="RimP_C"/>
</dbReference>
<dbReference type="InterPro" id="IPR036847">
    <property type="entry name" value="RimP_C_sf"/>
</dbReference>
<dbReference type="InterPro" id="IPR028989">
    <property type="entry name" value="RimP_N"/>
</dbReference>
<dbReference type="InterPro" id="IPR035956">
    <property type="entry name" value="RimP_N_sf"/>
</dbReference>
<dbReference type="NCBIfam" id="NF000927">
    <property type="entry name" value="PRK00092.1-1"/>
    <property type="match status" value="1"/>
</dbReference>
<dbReference type="PANTHER" id="PTHR33867">
    <property type="entry name" value="RIBOSOME MATURATION FACTOR RIMP"/>
    <property type="match status" value="1"/>
</dbReference>
<dbReference type="PANTHER" id="PTHR33867:SF1">
    <property type="entry name" value="RIBOSOME MATURATION FACTOR RIMP"/>
    <property type="match status" value="1"/>
</dbReference>
<dbReference type="Pfam" id="PF17384">
    <property type="entry name" value="DUF150_C"/>
    <property type="match status" value="1"/>
</dbReference>
<dbReference type="Pfam" id="PF02576">
    <property type="entry name" value="RimP_N"/>
    <property type="match status" value="1"/>
</dbReference>
<dbReference type="SUPFAM" id="SSF74942">
    <property type="entry name" value="YhbC-like, C-terminal domain"/>
    <property type="match status" value="1"/>
</dbReference>
<dbReference type="SUPFAM" id="SSF75420">
    <property type="entry name" value="YhbC-like, N-terminal domain"/>
    <property type="match status" value="1"/>
</dbReference>